<name>MRT4_CANGA</name>
<protein>
    <recommendedName>
        <fullName evidence="1">Ribosome assembly factor mrt4</fullName>
    </recommendedName>
    <alternativeName>
        <fullName evidence="1">mRNA turnover protein 4</fullName>
    </alternativeName>
</protein>
<organism>
    <name type="scientific">Candida glabrata (strain ATCC 2001 / BCRC 20586 / JCM 3761 / NBRC 0622 / NRRL Y-65 / CBS 138)</name>
    <name type="common">Yeast</name>
    <name type="synonym">Nakaseomyces glabratus</name>
    <dbReference type="NCBI Taxonomy" id="284593"/>
    <lineage>
        <taxon>Eukaryota</taxon>
        <taxon>Fungi</taxon>
        <taxon>Dikarya</taxon>
        <taxon>Ascomycota</taxon>
        <taxon>Saccharomycotina</taxon>
        <taxon>Saccharomycetes</taxon>
        <taxon>Saccharomycetales</taxon>
        <taxon>Saccharomycetaceae</taxon>
        <taxon>Nakaseomyces</taxon>
    </lineage>
</organism>
<comment type="function">
    <text evidence="1">Component of the ribosome assembly machinery. Nuclear paralog of the ribosomal protein P0, it binds pre-60S subunits at an early stage of assembly in the nucleolus, and is replaced by P0 in cytoplasmic pre-60S subunits and mature 80S ribosomes.</text>
</comment>
<comment type="subunit">
    <text evidence="1">Associates with the pre-60S ribosomal particle.</text>
</comment>
<comment type="subcellular location">
    <subcellularLocation>
        <location evidence="1">Nucleus</location>
        <location evidence="1">Nucleolus</location>
    </subcellularLocation>
    <subcellularLocation>
        <location evidence="1">Cytoplasm</location>
    </subcellularLocation>
    <text evidence="1">Shuttles between the nucleus and the cytoplasm.</text>
</comment>
<comment type="similarity">
    <text evidence="2">Belongs to the universal ribosomal protein uL10 family.</text>
</comment>
<accession>Q6FJ04</accession>
<gene>
    <name evidence="1" type="primary">MRT4</name>
    <name type="ordered locus">CAGL0M10197g</name>
</gene>
<sequence>MPRSKRSKLVTLAQTDKKGRENKERIFDEVREALDTYKYVFVLQLDDVRTPVLQEIREAWVGSKLLMGKRKVLEKALGTTREQEYKENLSKLTKYCSGVIGLLFTNETLDTVKEYFEAYSRLDYSRPNSRAPITFEVPEGIVYSRGGQIPIEEDVPMAHSLEPTLRNKYEMPTKIKAGKITLEAPYLVCKEGQKLDVRQALILKQFGVALAQFKVIISAYYDNESSTVSELNINKKQDA</sequence>
<dbReference type="EMBL" id="CR380959">
    <property type="protein sequence ID" value="CAG62768.1"/>
    <property type="molecule type" value="Genomic_DNA"/>
</dbReference>
<dbReference type="RefSeq" id="XP_449790.1">
    <property type="nucleotide sequence ID" value="XM_449790.1"/>
</dbReference>
<dbReference type="SMR" id="Q6FJ04"/>
<dbReference type="FunCoup" id="Q6FJ04">
    <property type="interactions" value="1174"/>
</dbReference>
<dbReference type="STRING" id="284593.Q6FJ04"/>
<dbReference type="EnsemblFungi" id="CAGL0M10197g-T">
    <property type="protein sequence ID" value="CAGL0M10197g-T-p1"/>
    <property type="gene ID" value="CAGL0M10197g"/>
</dbReference>
<dbReference type="KEGG" id="cgr:2891354"/>
<dbReference type="CGD" id="CAL0137229">
    <property type="gene designation" value="CAGL0M10197g"/>
</dbReference>
<dbReference type="VEuPathDB" id="FungiDB:B1J91_M10197g"/>
<dbReference type="VEuPathDB" id="FungiDB:CAGL0M10197g"/>
<dbReference type="eggNOG" id="KOG0816">
    <property type="taxonomic scope" value="Eukaryota"/>
</dbReference>
<dbReference type="HOGENOM" id="CLU_071690_0_0_1"/>
<dbReference type="InParanoid" id="Q6FJ04"/>
<dbReference type="OMA" id="LEWAENY"/>
<dbReference type="Proteomes" id="UP000002428">
    <property type="component" value="Chromosome M"/>
</dbReference>
<dbReference type="GO" id="GO:0005737">
    <property type="term" value="C:cytoplasm"/>
    <property type="evidence" value="ECO:0007669"/>
    <property type="project" value="UniProtKB-SubCell"/>
</dbReference>
<dbReference type="GO" id="GO:0005730">
    <property type="term" value="C:nucleolus"/>
    <property type="evidence" value="ECO:0007669"/>
    <property type="project" value="UniProtKB-SubCell"/>
</dbReference>
<dbReference type="GO" id="GO:0005654">
    <property type="term" value="C:nucleoplasm"/>
    <property type="evidence" value="ECO:0007669"/>
    <property type="project" value="EnsemblFungi"/>
</dbReference>
<dbReference type="GO" id="GO:0030687">
    <property type="term" value="C:preribosome, large subunit precursor"/>
    <property type="evidence" value="ECO:0007669"/>
    <property type="project" value="EnsemblFungi"/>
</dbReference>
<dbReference type="GO" id="GO:0032040">
    <property type="term" value="C:small-subunit processome"/>
    <property type="evidence" value="ECO:0007669"/>
    <property type="project" value="EnsemblFungi"/>
</dbReference>
<dbReference type="GO" id="GO:0003723">
    <property type="term" value="F:RNA binding"/>
    <property type="evidence" value="ECO:0007669"/>
    <property type="project" value="TreeGrafter"/>
</dbReference>
<dbReference type="GO" id="GO:0000956">
    <property type="term" value="P:nuclear-transcribed mRNA catabolic process"/>
    <property type="evidence" value="ECO:0007669"/>
    <property type="project" value="EnsemblFungi"/>
</dbReference>
<dbReference type="GO" id="GO:0000027">
    <property type="term" value="P:ribosomal large subunit assembly"/>
    <property type="evidence" value="ECO:0007669"/>
    <property type="project" value="InterPro"/>
</dbReference>
<dbReference type="GO" id="GO:0000055">
    <property type="term" value="P:ribosomal large subunit export from nucleus"/>
    <property type="evidence" value="ECO:0007669"/>
    <property type="project" value="EnsemblFungi"/>
</dbReference>
<dbReference type="GO" id="GO:0006364">
    <property type="term" value="P:rRNA processing"/>
    <property type="evidence" value="ECO:0007669"/>
    <property type="project" value="EnsemblFungi"/>
</dbReference>
<dbReference type="CDD" id="cd05796">
    <property type="entry name" value="Ribosomal_P0_like"/>
    <property type="match status" value="1"/>
</dbReference>
<dbReference type="FunFam" id="3.30.70.1730:FF:000005">
    <property type="entry name" value="Ribosome assembly factor mrt4"/>
    <property type="match status" value="1"/>
</dbReference>
<dbReference type="FunFam" id="3.90.105.20:FF:000003">
    <property type="entry name" value="Ribosome assembly factor mrt4"/>
    <property type="match status" value="1"/>
</dbReference>
<dbReference type="Gene3D" id="3.30.70.1730">
    <property type="match status" value="1"/>
</dbReference>
<dbReference type="Gene3D" id="3.90.105.20">
    <property type="match status" value="1"/>
</dbReference>
<dbReference type="InterPro" id="IPR033867">
    <property type="entry name" value="Mrt4"/>
</dbReference>
<dbReference type="InterPro" id="IPR001790">
    <property type="entry name" value="Ribosomal_uL10"/>
</dbReference>
<dbReference type="InterPro" id="IPR040637">
    <property type="entry name" value="Ribosomal_uL10-like_insert"/>
</dbReference>
<dbReference type="InterPro" id="IPR043164">
    <property type="entry name" value="Ribosomal_uL10-like_insert_sf"/>
</dbReference>
<dbReference type="InterPro" id="IPR043141">
    <property type="entry name" value="Ribosomal_uL10-like_sf"/>
</dbReference>
<dbReference type="InterPro" id="IPR051742">
    <property type="entry name" value="Ribosome_Assembly_uL10"/>
</dbReference>
<dbReference type="PANTHER" id="PTHR45841:SF1">
    <property type="entry name" value="MRNA TURNOVER PROTEIN 4 HOMOLOG"/>
    <property type="match status" value="1"/>
</dbReference>
<dbReference type="PANTHER" id="PTHR45841">
    <property type="entry name" value="MRNA TURNOVER PROTEIN 4 MRTO4"/>
    <property type="match status" value="1"/>
</dbReference>
<dbReference type="Pfam" id="PF00466">
    <property type="entry name" value="Ribosomal_L10"/>
    <property type="match status" value="1"/>
</dbReference>
<dbReference type="Pfam" id="PF17777">
    <property type="entry name" value="RL10P_insert"/>
    <property type="match status" value="1"/>
</dbReference>
<dbReference type="SUPFAM" id="SSF160369">
    <property type="entry name" value="Ribosomal protein L10-like"/>
    <property type="match status" value="1"/>
</dbReference>
<reference key="1">
    <citation type="journal article" date="2004" name="Nature">
        <title>Genome evolution in yeasts.</title>
        <authorList>
            <person name="Dujon B."/>
            <person name="Sherman D."/>
            <person name="Fischer G."/>
            <person name="Durrens P."/>
            <person name="Casaregola S."/>
            <person name="Lafontaine I."/>
            <person name="de Montigny J."/>
            <person name="Marck C."/>
            <person name="Neuveglise C."/>
            <person name="Talla E."/>
            <person name="Goffard N."/>
            <person name="Frangeul L."/>
            <person name="Aigle M."/>
            <person name="Anthouard V."/>
            <person name="Babour A."/>
            <person name="Barbe V."/>
            <person name="Barnay S."/>
            <person name="Blanchin S."/>
            <person name="Beckerich J.-M."/>
            <person name="Beyne E."/>
            <person name="Bleykasten C."/>
            <person name="Boisrame A."/>
            <person name="Boyer J."/>
            <person name="Cattolico L."/>
            <person name="Confanioleri F."/>
            <person name="de Daruvar A."/>
            <person name="Despons L."/>
            <person name="Fabre E."/>
            <person name="Fairhead C."/>
            <person name="Ferry-Dumazet H."/>
            <person name="Groppi A."/>
            <person name="Hantraye F."/>
            <person name="Hennequin C."/>
            <person name="Jauniaux N."/>
            <person name="Joyet P."/>
            <person name="Kachouri R."/>
            <person name="Kerrest A."/>
            <person name="Koszul R."/>
            <person name="Lemaire M."/>
            <person name="Lesur I."/>
            <person name="Ma L."/>
            <person name="Muller H."/>
            <person name="Nicaud J.-M."/>
            <person name="Nikolski M."/>
            <person name="Oztas S."/>
            <person name="Ozier-Kalogeropoulos O."/>
            <person name="Pellenz S."/>
            <person name="Potier S."/>
            <person name="Richard G.-F."/>
            <person name="Straub M.-L."/>
            <person name="Suleau A."/>
            <person name="Swennen D."/>
            <person name="Tekaia F."/>
            <person name="Wesolowski-Louvel M."/>
            <person name="Westhof E."/>
            <person name="Wirth B."/>
            <person name="Zeniou-Meyer M."/>
            <person name="Zivanovic Y."/>
            <person name="Bolotin-Fukuhara M."/>
            <person name="Thierry A."/>
            <person name="Bouchier C."/>
            <person name="Caudron B."/>
            <person name="Scarpelli C."/>
            <person name="Gaillardin C."/>
            <person name="Weissenbach J."/>
            <person name="Wincker P."/>
            <person name="Souciet J.-L."/>
        </authorList>
    </citation>
    <scope>NUCLEOTIDE SEQUENCE [LARGE SCALE GENOMIC DNA]</scope>
    <source>
        <strain>ATCC 2001 / BCRC 20586 / JCM 3761 / NBRC 0622 / NRRL Y-65 / CBS 138</strain>
    </source>
</reference>
<keyword id="KW-0963">Cytoplasm</keyword>
<keyword id="KW-0539">Nucleus</keyword>
<keyword id="KW-1185">Reference proteome</keyword>
<keyword id="KW-0690">Ribosome biogenesis</keyword>
<evidence type="ECO:0000250" key="1">
    <source>
        <dbReference type="UniProtKB" id="P33201"/>
    </source>
</evidence>
<evidence type="ECO:0000305" key="2"/>
<feature type="chain" id="PRO_0000154812" description="Ribosome assembly factor mrt4">
    <location>
        <begin position="1"/>
        <end position="239"/>
    </location>
</feature>
<proteinExistence type="inferred from homology"/>